<reference key="1">
    <citation type="journal article" date="2007" name="J. Bacteriol.">
        <title>The genome sequence of avian pathogenic Escherichia coli strain O1:K1:H7 shares strong similarities with human extraintestinal pathogenic E. coli genomes.</title>
        <authorList>
            <person name="Johnson T.J."/>
            <person name="Kariyawasam S."/>
            <person name="Wannemuehler Y."/>
            <person name="Mangiamele P."/>
            <person name="Johnson S.J."/>
            <person name="Doetkott C."/>
            <person name="Skyberg J.A."/>
            <person name="Lynne A.M."/>
            <person name="Johnson J.R."/>
            <person name="Nolan L.K."/>
        </authorList>
    </citation>
    <scope>NUCLEOTIDE SEQUENCE [LARGE SCALE GENOMIC DNA]</scope>
</reference>
<feature type="chain" id="PRO_0000374290" description="tRNA-2-methylthio-N(6)-dimethylallyladenosine synthase">
    <location>
        <begin position="1"/>
        <end position="474"/>
    </location>
</feature>
<feature type="domain" description="MTTase N-terminal" evidence="1">
    <location>
        <begin position="3"/>
        <end position="120"/>
    </location>
</feature>
<feature type="domain" description="Radical SAM core" evidence="2">
    <location>
        <begin position="143"/>
        <end position="375"/>
    </location>
</feature>
<feature type="domain" description="TRAM" evidence="1">
    <location>
        <begin position="378"/>
        <end position="441"/>
    </location>
</feature>
<feature type="binding site" evidence="1">
    <location>
        <position position="12"/>
    </location>
    <ligand>
        <name>[4Fe-4S] cluster</name>
        <dbReference type="ChEBI" id="CHEBI:49883"/>
        <label>1</label>
    </ligand>
</feature>
<feature type="binding site" evidence="1">
    <location>
        <position position="49"/>
    </location>
    <ligand>
        <name>[4Fe-4S] cluster</name>
        <dbReference type="ChEBI" id="CHEBI:49883"/>
        <label>1</label>
    </ligand>
</feature>
<feature type="binding site" evidence="1">
    <location>
        <position position="83"/>
    </location>
    <ligand>
        <name>[4Fe-4S] cluster</name>
        <dbReference type="ChEBI" id="CHEBI:49883"/>
        <label>1</label>
    </ligand>
</feature>
<feature type="binding site" evidence="1">
    <location>
        <position position="157"/>
    </location>
    <ligand>
        <name>[4Fe-4S] cluster</name>
        <dbReference type="ChEBI" id="CHEBI:49883"/>
        <label>2</label>
        <note>4Fe-4S-S-AdoMet</note>
    </ligand>
</feature>
<feature type="binding site" evidence="1">
    <location>
        <position position="161"/>
    </location>
    <ligand>
        <name>[4Fe-4S] cluster</name>
        <dbReference type="ChEBI" id="CHEBI:49883"/>
        <label>2</label>
        <note>4Fe-4S-S-AdoMet</note>
    </ligand>
</feature>
<feature type="binding site" evidence="1">
    <location>
        <position position="164"/>
    </location>
    <ligand>
        <name>[4Fe-4S] cluster</name>
        <dbReference type="ChEBI" id="CHEBI:49883"/>
        <label>2</label>
        <note>4Fe-4S-S-AdoMet</note>
    </ligand>
</feature>
<comment type="function">
    <text evidence="1">Catalyzes the methylthiolation of N6-(dimethylallyl)adenosine (i(6)A), leading to the formation of 2-methylthio-N6-(dimethylallyl)adenosine (ms(2)i(6)A) at position 37 in tRNAs that read codons beginning with uridine.</text>
</comment>
<comment type="catalytic activity">
    <reaction evidence="1">
        <text>N(6)-dimethylallyladenosine(37) in tRNA + (sulfur carrier)-SH + AH2 + 2 S-adenosyl-L-methionine = 2-methylsulfanyl-N(6)-dimethylallyladenosine(37) in tRNA + (sulfur carrier)-H + 5'-deoxyadenosine + L-methionine + A + S-adenosyl-L-homocysteine + 2 H(+)</text>
        <dbReference type="Rhea" id="RHEA:37067"/>
        <dbReference type="Rhea" id="RHEA-COMP:10375"/>
        <dbReference type="Rhea" id="RHEA-COMP:10376"/>
        <dbReference type="Rhea" id="RHEA-COMP:14737"/>
        <dbReference type="Rhea" id="RHEA-COMP:14739"/>
        <dbReference type="ChEBI" id="CHEBI:13193"/>
        <dbReference type="ChEBI" id="CHEBI:15378"/>
        <dbReference type="ChEBI" id="CHEBI:17319"/>
        <dbReference type="ChEBI" id="CHEBI:17499"/>
        <dbReference type="ChEBI" id="CHEBI:29917"/>
        <dbReference type="ChEBI" id="CHEBI:57844"/>
        <dbReference type="ChEBI" id="CHEBI:57856"/>
        <dbReference type="ChEBI" id="CHEBI:59789"/>
        <dbReference type="ChEBI" id="CHEBI:64428"/>
        <dbReference type="ChEBI" id="CHEBI:74415"/>
        <dbReference type="ChEBI" id="CHEBI:74417"/>
        <dbReference type="EC" id="2.8.4.3"/>
    </reaction>
</comment>
<comment type="cofactor">
    <cofactor evidence="1">
        <name>[4Fe-4S] cluster</name>
        <dbReference type="ChEBI" id="CHEBI:49883"/>
    </cofactor>
    <text evidence="1">Binds 2 [4Fe-4S] clusters. One cluster is coordinated with 3 cysteines and an exchangeable S-adenosyl-L-methionine.</text>
</comment>
<comment type="subunit">
    <text evidence="1">Monomer.</text>
</comment>
<comment type="subcellular location">
    <subcellularLocation>
        <location evidence="1">Cytoplasm</location>
    </subcellularLocation>
</comment>
<comment type="similarity">
    <text evidence="1">Belongs to the methylthiotransferase family. MiaB subfamily.</text>
</comment>
<name>MIAB_ECOK1</name>
<protein>
    <recommendedName>
        <fullName evidence="1">tRNA-2-methylthio-N(6)-dimethylallyladenosine synthase</fullName>
        <ecNumber evidence="1">2.8.4.3</ecNumber>
    </recommendedName>
    <alternativeName>
        <fullName evidence="1">(Dimethylallyl)adenosine tRNA methylthiotransferase MiaB</fullName>
    </alternativeName>
    <alternativeName>
        <fullName evidence="1">tRNA-i(6)A37 methylthiotransferase</fullName>
    </alternativeName>
</protein>
<gene>
    <name evidence="1" type="primary">miaB</name>
    <name type="ordered locus">Ecok1_05750</name>
    <name type="ORF">APECO1_1402</name>
</gene>
<evidence type="ECO:0000255" key="1">
    <source>
        <dbReference type="HAMAP-Rule" id="MF_01864"/>
    </source>
</evidence>
<evidence type="ECO:0000255" key="2">
    <source>
        <dbReference type="PROSITE-ProRule" id="PRU01266"/>
    </source>
</evidence>
<keyword id="KW-0004">4Fe-4S</keyword>
<keyword id="KW-0963">Cytoplasm</keyword>
<keyword id="KW-0408">Iron</keyword>
<keyword id="KW-0411">Iron-sulfur</keyword>
<keyword id="KW-0479">Metal-binding</keyword>
<keyword id="KW-1185">Reference proteome</keyword>
<keyword id="KW-0949">S-adenosyl-L-methionine</keyword>
<keyword id="KW-0808">Transferase</keyword>
<keyword id="KW-0819">tRNA processing</keyword>
<proteinExistence type="inferred from homology"/>
<sequence>MTKKLHIKTWGCQMNEYDSSKMADLLDATHGYQLTDVAEEADVLLLNTCSIREKAQEKVFHQLGRWKLLKEKNPDLIIGVGGCVASQEGEHIRQRAHYVDIIFGPQTLHRLPEMINSVRGDRSPVVDISFPEIEKFDRLPEPRAEGPTAFVSIMEGCNKYCTYCVVPYTRGEEVSRPSDDILFEIAQLAAQGVREVNLLGQNVNAWRGENYDGTTGSFADLLRLVAAIDGIDRIRFTTSHPIEFTDDIIEVYRDTPELVSFLHLPVQSGSDRILNLMGRTHTALEYKAIIRKLRAARPDIQISSDFIVGFPGETTDDFEKTMKLIADVNFDMSYSFIFSARPGTPAADMVDDVPEEEKKQRLYILQERINQQAMAWSRRMLGTTQRILVEGTSRKSIMELSGRTENNRVVNFEGTPDMIGKFVDVEITDVYPNSLRGKVVRTEDEMGLRVAETPESVIARTRKENDLGVGYYQP</sequence>
<accession>A1A8S9</accession>
<organism>
    <name type="scientific">Escherichia coli O1:K1 / APEC</name>
    <dbReference type="NCBI Taxonomy" id="405955"/>
    <lineage>
        <taxon>Bacteria</taxon>
        <taxon>Pseudomonadati</taxon>
        <taxon>Pseudomonadota</taxon>
        <taxon>Gammaproteobacteria</taxon>
        <taxon>Enterobacterales</taxon>
        <taxon>Enterobacteriaceae</taxon>
        <taxon>Escherichia</taxon>
    </lineage>
</organism>
<dbReference type="EC" id="2.8.4.3" evidence="1"/>
<dbReference type="EMBL" id="CP000468">
    <property type="protein sequence ID" value="ABJ00069.1"/>
    <property type="molecule type" value="Genomic_DNA"/>
</dbReference>
<dbReference type="RefSeq" id="WP_000162737.1">
    <property type="nucleotide sequence ID" value="NZ_CADILS010000006.1"/>
</dbReference>
<dbReference type="SMR" id="A1A8S9"/>
<dbReference type="KEGG" id="ecv:APECO1_1402"/>
<dbReference type="HOGENOM" id="CLU_018697_2_0_6"/>
<dbReference type="Proteomes" id="UP000008216">
    <property type="component" value="Chromosome"/>
</dbReference>
<dbReference type="GO" id="GO:0005829">
    <property type="term" value="C:cytosol"/>
    <property type="evidence" value="ECO:0007669"/>
    <property type="project" value="TreeGrafter"/>
</dbReference>
<dbReference type="GO" id="GO:0051539">
    <property type="term" value="F:4 iron, 4 sulfur cluster binding"/>
    <property type="evidence" value="ECO:0007669"/>
    <property type="project" value="UniProtKB-UniRule"/>
</dbReference>
<dbReference type="GO" id="GO:0046872">
    <property type="term" value="F:metal ion binding"/>
    <property type="evidence" value="ECO:0007669"/>
    <property type="project" value="UniProtKB-KW"/>
</dbReference>
<dbReference type="GO" id="GO:0035597">
    <property type="term" value="F:N6-isopentenyladenosine methylthiotransferase activity"/>
    <property type="evidence" value="ECO:0007669"/>
    <property type="project" value="TreeGrafter"/>
</dbReference>
<dbReference type="CDD" id="cd01335">
    <property type="entry name" value="Radical_SAM"/>
    <property type="match status" value="1"/>
</dbReference>
<dbReference type="FunFam" id="3.40.50.12160:FF:000001">
    <property type="entry name" value="tRNA-2-methylthio-N(6)-dimethylallyladenosine synthase"/>
    <property type="match status" value="1"/>
</dbReference>
<dbReference type="FunFam" id="3.80.30.20:FF:000001">
    <property type="entry name" value="tRNA-2-methylthio-N(6)-dimethylallyladenosine synthase 2"/>
    <property type="match status" value="1"/>
</dbReference>
<dbReference type="Gene3D" id="3.40.50.12160">
    <property type="entry name" value="Methylthiotransferase, N-terminal domain"/>
    <property type="match status" value="1"/>
</dbReference>
<dbReference type="Gene3D" id="3.80.30.20">
    <property type="entry name" value="tm_1862 like domain"/>
    <property type="match status" value="1"/>
</dbReference>
<dbReference type="HAMAP" id="MF_01864">
    <property type="entry name" value="tRNA_metthiotr_MiaB"/>
    <property type="match status" value="1"/>
</dbReference>
<dbReference type="InterPro" id="IPR006638">
    <property type="entry name" value="Elp3/MiaA/NifB-like_rSAM"/>
</dbReference>
<dbReference type="InterPro" id="IPR005839">
    <property type="entry name" value="Methylthiotransferase"/>
</dbReference>
<dbReference type="InterPro" id="IPR020612">
    <property type="entry name" value="Methylthiotransferase_CS"/>
</dbReference>
<dbReference type="InterPro" id="IPR013848">
    <property type="entry name" value="Methylthiotransferase_N"/>
</dbReference>
<dbReference type="InterPro" id="IPR038135">
    <property type="entry name" value="Methylthiotransferase_N_sf"/>
</dbReference>
<dbReference type="InterPro" id="IPR006463">
    <property type="entry name" value="MiaB_methiolase"/>
</dbReference>
<dbReference type="InterPro" id="IPR007197">
    <property type="entry name" value="rSAM"/>
</dbReference>
<dbReference type="InterPro" id="IPR023404">
    <property type="entry name" value="rSAM_horseshoe"/>
</dbReference>
<dbReference type="InterPro" id="IPR002792">
    <property type="entry name" value="TRAM_dom"/>
</dbReference>
<dbReference type="NCBIfam" id="TIGR01574">
    <property type="entry name" value="miaB-methiolase"/>
    <property type="match status" value="1"/>
</dbReference>
<dbReference type="NCBIfam" id="TIGR00089">
    <property type="entry name" value="MiaB/RimO family radical SAM methylthiotransferase"/>
    <property type="match status" value="1"/>
</dbReference>
<dbReference type="PANTHER" id="PTHR43020">
    <property type="entry name" value="CDK5 REGULATORY SUBUNIT-ASSOCIATED PROTEIN 1"/>
    <property type="match status" value="1"/>
</dbReference>
<dbReference type="PANTHER" id="PTHR43020:SF2">
    <property type="entry name" value="MITOCHONDRIAL TRNA METHYLTHIOTRANSFERASE CDK5RAP1"/>
    <property type="match status" value="1"/>
</dbReference>
<dbReference type="Pfam" id="PF04055">
    <property type="entry name" value="Radical_SAM"/>
    <property type="match status" value="1"/>
</dbReference>
<dbReference type="Pfam" id="PF01938">
    <property type="entry name" value="TRAM"/>
    <property type="match status" value="1"/>
</dbReference>
<dbReference type="Pfam" id="PF00919">
    <property type="entry name" value="UPF0004"/>
    <property type="match status" value="1"/>
</dbReference>
<dbReference type="SFLD" id="SFLDF00273">
    <property type="entry name" value="(dimethylallyl)adenosine_tRNA"/>
    <property type="match status" value="1"/>
</dbReference>
<dbReference type="SFLD" id="SFLDG01082">
    <property type="entry name" value="B12-binding_domain_containing"/>
    <property type="match status" value="1"/>
</dbReference>
<dbReference type="SFLD" id="SFLDS00029">
    <property type="entry name" value="Radical_SAM"/>
    <property type="match status" value="1"/>
</dbReference>
<dbReference type="SMART" id="SM00729">
    <property type="entry name" value="Elp3"/>
    <property type="match status" value="1"/>
</dbReference>
<dbReference type="SUPFAM" id="SSF102114">
    <property type="entry name" value="Radical SAM enzymes"/>
    <property type="match status" value="1"/>
</dbReference>
<dbReference type="PROSITE" id="PS51449">
    <property type="entry name" value="MTTASE_N"/>
    <property type="match status" value="1"/>
</dbReference>
<dbReference type="PROSITE" id="PS01278">
    <property type="entry name" value="MTTASE_RADICAL"/>
    <property type="match status" value="1"/>
</dbReference>
<dbReference type="PROSITE" id="PS51918">
    <property type="entry name" value="RADICAL_SAM"/>
    <property type="match status" value="1"/>
</dbReference>
<dbReference type="PROSITE" id="PS50926">
    <property type="entry name" value="TRAM"/>
    <property type="match status" value="1"/>
</dbReference>